<reference key="1">
    <citation type="submission" date="2007-11" db="EMBL/GenBank/DDBJ databases">
        <authorList>
            <consortium name="The Salmonella enterica serovar Paratyphi B Genome Sequencing Project"/>
            <person name="McClelland M."/>
            <person name="Sanderson E.K."/>
            <person name="Porwollik S."/>
            <person name="Spieth J."/>
            <person name="Clifton W.S."/>
            <person name="Fulton R."/>
            <person name="Cordes M."/>
            <person name="Wollam A."/>
            <person name="Shah N."/>
            <person name="Pepin K."/>
            <person name="Bhonagiri V."/>
            <person name="Nash W."/>
            <person name="Johnson M."/>
            <person name="Thiruvilangam P."/>
            <person name="Wilson R."/>
        </authorList>
    </citation>
    <scope>NUCLEOTIDE SEQUENCE [LARGE SCALE GENOMIC DNA]</scope>
    <source>
        <strain>ATCC BAA-1250 / SPB7</strain>
    </source>
</reference>
<feature type="chain" id="PRO_1000076284" description="Histidine--tRNA ligase">
    <location>
        <begin position="1"/>
        <end position="424"/>
    </location>
</feature>
<sequence length="424" mass="46927">MAKNIQAIRGMNDYLPGETAIWQRIEGTLKNVLGSYGYSEIRLPIVEQTPLFKRAIGEVTDVVEKEMYTFEDRNGDSLTLRPEGTAGCVRAGIEHGLLYNQEQRLWYIGPMFRHERPQKGRYRQFHQLGAEVFGLQGPDIDAELIMLTARWWRALGIAEHVSLELNSIGSLEARANYRDALVAFLEQHQETLDEDCKRRMYTNPLRVLDSKNPDVQALLNDAPALGDYLDDDSREHFAGLCKLLDAAGIAYTVNQRLVRGLDYYNRTVFEWVTNSLGSQGTVCAGGRYDGLVEQLGGRATPAVGFAMGLERLVLLVQAVNPEFIASPVVDIYLVAAGAQTQSAAMTLAERLRDEMPGVKLMTNHGGGNFKKQFARADKWGARIALVLGESEVADGTVVVKDLRSGEQTAVAQDSVAAHLRTLLG</sequence>
<organism>
    <name type="scientific">Salmonella paratyphi B (strain ATCC BAA-1250 / SPB7)</name>
    <dbReference type="NCBI Taxonomy" id="1016998"/>
    <lineage>
        <taxon>Bacteria</taxon>
        <taxon>Pseudomonadati</taxon>
        <taxon>Pseudomonadota</taxon>
        <taxon>Gammaproteobacteria</taxon>
        <taxon>Enterobacterales</taxon>
        <taxon>Enterobacteriaceae</taxon>
        <taxon>Salmonella</taxon>
    </lineage>
</organism>
<gene>
    <name evidence="1" type="primary">hisS</name>
    <name type="ordered locus">SPAB_00419</name>
</gene>
<dbReference type="EC" id="6.1.1.21" evidence="1"/>
<dbReference type="EMBL" id="CP000886">
    <property type="protein sequence ID" value="ABX65852.1"/>
    <property type="molecule type" value="Genomic_DNA"/>
</dbReference>
<dbReference type="RefSeq" id="WP_001107141.1">
    <property type="nucleotide sequence ID" value="NC_010102.1"/>
</dbReference>
<dbReference type="SMR" id="A9N202"/>
<dbReference type="KEGG" id="spq:SPAB_00419"/>
<dbReference type="PATRIC" id="fig|1016998.12.peg.393"/>
<dbReference type="HOGENOM" id="CLU_025113_1_1_6"/>
<dbReference type="BioCyc" id="SENT1016998:SPAB_RS01705-MONOMER"/>
<dbReference type="Proteomes" id="UP000008556">
    <property type="component" value="Chromosome"/>
</dbReference>
<dbReference type="GO" id="GO:0005737">
    <property type="term" value="C:cytoplasm"/>
    <property type="evidence" value="ECO:0007669"/>
    <property type="project" value="UniProtKB-SubCell"/>
</dbReference>
<dbReference type="GO" id="GO:0005524">
    <property type="term" value="F:ATP binding"/>
    <property type="evidence" value="ECO:0007669"/>
    <property type="project" value="UniProtKB-UniRule"/>
</dbReference>
<dbReference type="GO" id="GO:0004821">
    <property type="term" value="F:histidine-tRNA ligase activity"/>
    <property type="evidence" value="ECO:0007669"/>
    <property type="project" value="UniProtKB-UniRule"/>
</dbReference>
<dbReference type="GO" id="GO:0006427">
    <property type="term" value="P:histidyl-tRNA aminoacylation"/>
    <property type="evidence" value="ECO:0007669"/>
    <property type="project" value="UniProtKB-UniRule"/>
</dbReference>
<dbReference type="CDD" id="cd00773">
    <property type="entry name" value="HisRS-like_core"/>
    <property type="match status" value="1"/>
</dbReference>
<dbReference type="CDD" id="cd00859">
    <property type="entry name" value="HisRS_anticodon"/>
    <property type="match status" value="1"/>
</dbReference>
<dbReference type="FunFam" id="3.30.930.10:FF:000005">
    <property type="entry name" value="Histidine--tRNA ligase"/>
    <property type="match status" value="1"/>
</dbReference>
<dbReference type="FunFam" id="3.40.50.800:FF:000007">
    <property type="entry name" value="Histidine--tRNA ligase"/>
    <property type="match status" value="1"/>
</dbReference>
<dbReference type="Gene3D" id="3.40.50.800">
    <property type="entry name" value="Anticodon-binding domain"/>
    <property type="match status" value="1"/>
</dbReference>
<dbReference type="Gene3D" id="3.30.930.10">
    <property type="entry name" value="Bira Bifunctional Protein, Domain 2"/>
    <property type="match status" value="1"/>
</dbReference>
<dbReference type="HAMAP" id="MF_00127">
    <property type="entry name" value="His_tRNA_synth"/>
    <property type="match status" value="1"/>
</dbReference>
<dbReference type="InterPro" id="IPR006195">
    <property type="entry name" value="aa-tRNA-synth_II"/>
</dbReference>
<dbReference type="InterPro" id="IPR045864">
    <property type="entry name" value="aa-tRNA-synth_II/BPL/LPL"/>
</dbReference>
<dbReference type="InterPro" id="IPR004154">
    <property type="entry name" value="Anticodon-bd"/>
</dbReference>
<dbReference type="InterPro" id="IPR036621">
    <property type="entry name" value="Anticodon-bd_dom_sf"/>
</dbReference>
<dbReference type="InterPro" id="IPR015807">
    <property type="entry name" value="His-tRNA-ligase"/>
</dbReference>
<dbReference type="InterPro" id="IPR041715">
    <property type="entry name" value="HisRS-like_core"/>
</dbReference>
<dbReference type="InterPro" id="IPR004516">
    <property type="entry name" value="HisRS/HisZ"/>
</dbReference>
<dbReference type="InterPro" id="IPR033656">
    <property type="entry name" value="HisRS_anticodon"/>
</dbReference>
<dbReference type="NCBIfam" id="TIGR00442">
    <property type="entry name" value="hisS"/>
    <property type="match status" value="1"/>
</dbReference>
<dbReference type="PANTHER" id="PTHR43707:SF1">
    <property type="entry name" value="HISTIDINE--TRNA LIGASE, MITOCHONDRIAL-RELATED"/>
    <property type="match status" value="1"/>
</dbReference>
<dbReference type="PANTHER" id="PTHR43707">
    <property type="entry name" value="HISTIDYL-TRNA SYNTHETASE"/>
    <property type="match status" value="1"/>
</dbReference>
<dbReference type="Pfam" id="PF03129">
    <property type="entry name" value="HGTP_anticodon"/>
    <property type="match status" value="1"/>
</dbReference>
<dbReference type="Pfam" id="PF13393">
    <property type="entry name" value="tRNA-synt_His"/>
    <property type="match status" value="1"/>
</dbReference>
<dbReference type="PIRSF" id="PIRSF001549">
    <property type="entry name" value="His-tRNA_synth"/>
    <property type="match status" value="1"/>
</dbReference>
<dbReference type="SUPFAM" id="SSF52954">
    <property type="entry name" value="Class II aaRS ABD-related"/>
    <property type="match status" value="1"/>
</dbReference>
<dbReference type="SUPFAM" id="SSF55681">
    <property type="entry name" value="Class II aaRS and biotin synthetases"/>
    <property type="match status" value="1"/>
</dbReference>
<dbReference type="PROSITE" id="PS50862">
    <property type="entry name" value="AA_TRNA_LIGASE_II"/>
    <property type="match status" value="1"/>
</dbReference>
<protein>
    <recommendedName>
        <fullName evidence="1">Histidine--tRNA ligase</fullName>
        <ecNumber evidence="1">6.1.1.21</ecNumber>
    </recommendedName>
    <alternativeName>
        <fullName evidence="1">Histidyl-tRNA synthetase</fullName>
        <shortName evidence="1">HisRS</shortName>
    </alternativeName>
</protein>
<comment type="catalytic activity">
    <reaction evidence="1">
        <text>tRNA(His) + L-histidine + ATP = L-histidyl-tRNA(His) + AMP + diphosphate + H(+)</text>
        <dbReference type="Rhea" id="RHEA:17313"/>
        <dbReference type="Rhea" id="RHEA-COMP:9665"/>
        <dbReference type="Rhea" id="RHEA-COMP:9689"/>
        <dbReference type="ChEBI" id="CHEBI:15378"/>
        <dbReference type="ChEBI" id="CHEBI:30616"/>
        <dbReference type="ChEBI" id="CHEBI:33019"/>
        <dbReference type="ChEBI" id="CHEBI:57595"/>
        <dbReference type="ChEBI" id="CHEBI:78442"/>
        <dbReference type="ChEBI" id="CHEBI:78527"/>
        <dbReference type="ChEBI" id="CHEBI:456215"/>
        <dbReference type="EC" id="6.1.1.21"/>
    </reaction>
</comment>
<comment type="subunit">
    <text evidence="1">Homodimer.</text>
</comment>
<comment type="subcellular location">
    <subcellularLocation>
        <location evidence="1">Cytoplasm</location>
    </subcellularLocation>
</comment>
<comment type="similarity">
    <text evidence="1">Belongs to the class-II aminoacyl-tRNA synthetase family.</text>
</comment>
<evidence type="ECO:0000255" key="1">
    <source>
        <dbReference type="HAMAP-Rule" id="MF_00127"/>
    </source>
</evidence>
<name>SYH_SALPB</name>
<proteinExistence type="inferred from homology"/>
<accession>A9N202</accession>
<keyword id="KW-0030">Aminoacyl-tRNA synthetase</keyword>
<keyword id="KW-0067">ATP-binding</keyword>
<keyword id="KW-0963">Cytoplasm</keyword>
<keyword id="KW-0436">Ligase</keyword>
<keyword id="KW-0547">Nucleotide-binding</keyword>
<keyword id="KW-0648">Protein biosynthesis</keyword>